<dbReference type="EMBL" id="AF221992">
    <property type="protein sequence ID" value="AAF73872.1"/>
    <property type="molecule type" value="mRNA"/>
</dbReference>
<dbReference type="EMBL" id="AF221993">
    <property type="protein sequence ID" value="AAF73873.1"/>
    <property type="molecule type" value="mRNA"/>
</dbReference>
<dbReference type="EMBL" id="AK291925">
    <property type="protein sequence ID" value="BAF84614.1"/>
    <property type="molecule type" value="mRNA"/>
</dbReference>
<dbReference type="EMBL" id="AL157427">
    <property type="protein sequence ID" value="CAB75652.1"/>
    <property type="molecule type" value="mRNA"/>
</dbReference>
<dbReference type="EMBL" id="AL034430">
    <property type="status" value="NOT_ANNOTATED_CDS"/>
    <property type="molecule type" value="Genomic_DNA"/>
</dbReference>
<dbReference type="EMBL" id="CH471133">
    <property type="protein sequence ID" value="EAX10344.1"/>
    <property type="molecule type" value="Genomic_DNA"/>
</dbReference>
<dbReference type="EMBL" id="CH471133">
    <property type="protein sequence ID" value="EAX10345.1"/>
    <property type="molecule type" value="Genomic_DNA"/>
</dbReference>
<dbReference type="CCDS" id="CCDS13111.1"/>
<dbReference type="PIR" id="T46911">
    <property type="entry name" value="T46911"/>
</dbReference>
<dbReference type="RefSeq" id="NP_061336.1">
    <property type="nucleotide sequence ID" value="NM_018848.3"/>
</dbReference>
<dbReference type="RefSeq" id="NP_740754.1">
    <property type="nucleotide sequence ID" value="NM_170784.3"/>
</dbReference>
<dbReference type="SMR" id="Q9NPJ1"/>
<dbReference type="BioGRID" id="113837">
    <property type="interactions" value="16"/>
</dbReference>
<dbReference type="CORUM" id="Q9NPJ1"/>
<dbReference type="DIP" id="DIP-60349N"/>
<dbReference type="FunCoup" id="Q9NPJ1">
    <property type="interactions" value="580"/>
</dbReference>
<dbReference type="IntAct" id="Q9NPJ1">
    <property type="interactions" value="15"/>
</dbReference>
<dbReference type="STRING" id="9606.ENSP00000246062"/>
<dbReference type="GlyGen" id="Q9NPJ1">
    <property type="glycosylation" value="1 site, 1 O-linked glycan (1 site)"/>
</dbReference>
<dbReference type="iPTMnet" id="Q9NPJ1"/>
<dbReference type="PhosphoSitePlus" id="Q9NPJ1"/>
<dbReference type="BioMuta" id="MKKS"/>
<dbReference type="DMDM" id="11133565"/>
<dbReference type="MassIVE" id="Q9NPJ1"/>
<dbReference type="PaxDb" id="9606-ENSP00000246062"/>
<dbReference type="PeptideAtlas" id="Q9NPJ1"/>
<dbReference type="ProteomicsDB" id="82024"/>
<dbReference type="Antibodypedia" id="24160">
    <property type="antibodies" value="149 antibodies from 24 providers"/>
</dbReference>
<dbReference type="DNASU" id="8195"/>
<dbReference type="Ensembl" id="ENST00000347364.7">
    <property type="protein sequence ID" value="ENSP00000246062.4"/>
    <property type="gene ID" value="ENSG00000125863.20"/>
</dbReference>
<dbReference type="Ensembl" id="ENST00000399054.6">
    <property type="protein sequence ID" value="ENSP00000382008.2"/>
    <property type="gene ID" value="ENSG00000125863.20"/>
</dbReference>
<dbReference type="Ensembl" id="ENST00000651692.1">
    <property type="protein sequence ID" value="ENSP00000498849.1"/>
    <property type="gene ID" value="ENSG00000125863.20"/>
</dbReference>
<dbReference type="GeneID" id="8195"/>
<dbReference type="KEGG" id="hsa:8195"/>
<dbReference type="MANE-Select" id="ENST00000347364.7">
    <property type="protein sequence ID" value="ENSP00000246062.4"/>
    <property type="RefSeq nucleotide sequence ID" value="NM_170784.3"/>
    <property type="RefSeq protein sequence ID" value="NP_740754.1"/>
</dbReference>
<dbReference type="UCSC" id="uc002wnt.3">
    <property type="organism name" value="human"/>
</dbReference>
<dbReference type="AGR" id="HGNC:7108"/>
<dbReference type="CTD" id="8195"/>
<dbReference type="DisGeNET" id="8195"/>
<dbReference type="GeneCards" id="MKKS"/>
<dbReference type="GeneReviews" id="MKKS"/>
<dbReference type="HGNC" id="HGNC:7108">
    <property type="gene designation" value="MKKS"/>
</dbReference>
<dbReference type="HPA" id="ENSG00000125863">
    <property type="expression patterns" value="Low tissue specificity"/>
</dbReference>
<dbReference type="MalaCards" id="MKKS"/>
<dbReference type="MIM" id="236700">
    <property type="type" value="phenotype"/>
</dbReference>
<dbReference type="MIM" id="604896">
    <property type="type" value="gene"/>
</dbReference>
<dbReference type="MIM" id="605231">
    <property type="type" value="phenotype"/>
</dbReference>
<dbReference type="neXtProt" id="NX_Q9NPJ1"/>
<dbReference type="OpenTargets" id="ENSG00000125863"/>
<dbReference type="Orphanet" id="110">
    <property type="disease" value="Bardet-Biedl syndrome"/>
</dbReference>
<dbReference type="Orphanet" id="2473">
    <property type="disease" value="McKusick-Kaufman syndrome"/>
</dbReference>
<dbReference type="PharmGKB" id="PA30826"/>
<dbReference type="VEuPathDB" id="HostDB:ENSG00000125863"/>
<dbReference type="eggNOG" id="KOG0360">
    <property type="taxonomic scope" value="Eukaryota"/>
</dbReference>
<dbReference type="GeneTree" id="ENSGT00390000007214"/>
<dbReference type="HOGENOM" id="CLU_478131_0_0_1"/>
<dbReference type="InParanoid" id="Q9NPJ1"/>
<dbReference type="OMA" id="LFVCQKV"/>
<dbReference type="OrthoDB" id="528704at2759"/>
<dbReference type="PAN-GO" id="Q9NPJ1">
    <property type="GO annotations" value="7 GO annotations based on evolutionary models"/>
</dbReference>
<dbReference type="PhylomeDB" id="Q9NPJ1"/>
<dbReference type="TreeFam" id="TF329106"/>
<dbReference type="PathwayCommons" id="Q9NPJ1"/>
<dbReference type="Reactome" id="R-HSA-5620922">
    <property type="pathway name" value="BBSome-mediated cargo-targeting to cilium"/>
</dbReference>
<dbReference type="SignaLink" id="Q9NPJ1"/>
<dbReference type="BioGRID-ORCS" id="8195">
    <property type="hits" value="12 hits in 1156 CRISPR screens"/>
</dbReference>
<dbReference type="CD-CODE" id="8C2F96ED">
    <property type="entry name" value="Centrosome"/>
</dbReference>
<dbReference type="ChiTaRS" id="MKKS">
    <property type="organism name" value="human"/>
</dbReference>
<dbReference type="GeneWiki" id="MKKS"/>
<dbReference type="GenomeRNAi" id="8195"/>
<dbReference type="Pharos" id="Q9NPJ1">
    <property type="development level" value="Tbio"/>
</dbReference>
<dbReference type="PRO" id="PR:Q9NPJ1"/>
<dbReference type="Proteomes" id="UP000005640">
    <property type="component" value="Chromosome 20"/>
</dbReference>
<dbReference type="RNAct" id="Q9NPJ1">
    <property type="molecule type" value="protein"/>
</dbReference>
<dbReference type="Bgee" id="ENSG00000125863">
    <property type="expression patterns" value="Expressed in middle temporal gyrus and 190 other cell types or tissues"/>
</dbReference>
<dbReference type="GO" id="GO:0005813">
    <property type="term" value="C:centrosome"/>
    <property type="evidence" value="ECO:0000314"/>
    <property type="project" value="HPA"/>
</dbReference>
<dbReference type="GO" id="GO:0036064">
    <property type="term" value="C:ciliary basal body"/>
    <property type="evidence" value="ECO:0000314"/>
    <property type="project" value="HPA"/>
</dbReference>
<dbReference type="GO" id="GO:0005737">
    <property type="term" value="C:cytoplasm"/>
    <property type="evidence" value="ECO:0000314"/>
    <property type="project" value="UniProtKB"/>
</dbReference>
<dbReference type="GO" id="GO:0005829">
    <property type="term" value="C:cytosol"/>
    <property type="evidence" value="ECO:0007669"/>
    <property type="project" value="UniProtKB-SubCell"/>
</dbReference>
<dbReference type="GO" id="GO:1902636">
    <property type="term" value="C:kinociliary basal body"/>
    <property type="evidence" value="ECO:0000318"/>
    <property type="project" value="GO_Central"/>
</dbReference>
<dbReference type="GO" id="GO:0031514">
    <property type="term" value="C:motile cilium"/>
    <property type="evidence" value="ECO:0000250"/>
    <property type="project" value="BHF-UCL"/>
</dbReference>
<dbReference type="GO" id="GO:0005634">
    <property type="term" value="C:nucleus"/>
    <property type="evidence" value="ECO:0000314"/>
    <property type="project" value="UniProtKB"/>
</dbReference>
<dbReference type="GO" id="GO:0005524">
    <property type="term" value="F:ATP binding"/>
    <property type="evidence" value="ECO:0007669"/>
    <property type="project" value="UniProtKB-KW"/>
</dbReference>
<dbReference type="GO" id="GO:0061629">
    <property type="term" value="F:RNA polymerase II-specific DNA-binding transcription factor binding"/>
    <property type="evidence" value="ECO:0000353"/>
    <property type="project" value="MGI"/>
</dbReference>
<dbReference type="GO" id="GO:0051082">
    <property type="term" value="F:unfolded protein binding"/>
    <property type="evidence" value="ECO:0000304"/>
    <property type="project" value="ProtInc"/>
</dbReference>
<dbReference type="GO" id="GO:0014824">
    <property type="term" value="P:artery smooth muscle contraction"/>
    <property type="evidence" value="ECO:0007669"/>
    <property type="project" value="Ensembl"/>
</dbReference>
<dbReference type="GO" id="GO:0048854">
    <property type="term" value="P:brain morphogenesis"/>
    <property type="evidence" value="ECO:0000250"/>
    <property type="project" value="BHF-UCL"/>
</dbReference>
<dbReference type="GO" id="GO:0051216">
    <property type="term" value="P:cartilage development"/>
    <property type="evidence" value="ECO:0007669"/>
    <property type="project" value="Ensembl"/>
</dbReference>
<dbReference type="GO" id="GO:0021987">
    <property type="term" value="P:cerebral cortex development"/>
    <property type="evidence" value="ECO:0000250"/>
    <property type="project" value="BHF-UCL"/>
</dbReference>
<dbReference type="GO" id="GO:0051131">
    <property type="term" value="P:chaperone-mediated protein complex assembly"/>
    <property type="evidence" value="ECO:0000318"/>
    <property type="project" value="GO_Central"/>
</dbReference>
<dbReference type="GO" id="GO:0060271">
    <property type="term" value="P:cilium assembly"/>
    <property type="evidence" value="ECO:0000315"/>
    <property type="project" value="UniProtKB"/>
</dbReference>
<dbReference type="GO" id="GO:0060027">
    <property type="term" value="P:convergent extension involved in gastrulation"/>
    <property type="evidence" value="ECO:0000250"/>
    <property type="project" value="BHF-UCL"/>
</dbReference>
<dbReference type="GO" id="GO:0050910">
    <property type="term" value="P:detection of mechanical stimulus involved in sensory perception of sound"/>
    <property type="evidence" value="ECO:0000250"/>
    <property type="project" value="BHF-UCL"/>
</dbReference>
<dbReference type="GO" id="GO:0007368">
    <property type="term" value="P:determination of left/right symmetry"/>
    <property type="evidence" value="ECO:0000250"/>
    <property type="project" value="BHF-UCL"/>
</dbReference>
<dbReference type="GO" id="GO:0032502">
    <property type="term" value="P:developmental process"/>
    <property type="evidence" value="ECO:0000318"/>
    <property type="project" value="GO_Central"/>
</dbReference>
<dbReference type="GO" id="GO:0060324">
    <property type="term" value="P:face development"/>
    <property type="evidence" value="ECO:0007669"/>
    <property type="project" value="Ensembl"/>
</dbReference>
<dbReference type="GO" id="GO:0045444">
    <property type="term" value="P:fat cell differentiation"/>
    <property type="evidence" value="ECO:0000250"/>
    <property type="project" value="BHF-UCL"/>
</dbReference>
<dbReference type="GO" id="GO:0008406">
    <property type="term" value="P:gonad development"/>
    <property type="evidence" value="ECO:0000304"/>
    <property type="project" value="ProtInc"/>
</dbReference>
<dbReference type="GO" id="GO:0007507">
    <property type="term" value="P:heart development"/>
    <property type="evidence" value="ECO:0000304"/>
    <property type="project" value="ProtInc"/>
</dbReference>
<dbReference type="GO" id="GO:0001947">
    <property type="term" value="P:heart looping"/>
    <property type="evidence" value="ECO:0000250"/>
    <property type="project" value="BHF-UCL"/>
</dbReference>
<dbReference type="GO" id="GO:0021766">
    <property type="term" value="P:hippocampus development"/>
    <property type="evidence" value="ECO:0000250"/>
    <property type="project" value="BHF-UCL"/>
</dbReference>
<dbReference type="GO" id="GO:0046907">
    <property type="term" value="P:intracellular transport"/>
    <property type="evidence" value="ECO:0000250"/>
    <property type="project" value="BHF-UCL"/>
</dbReference>
<dbReference type="GO" id="GO:0032402">
    <property type="term" value="P:melanosome transport"/>
    <property type="evidence" value="ECO:0000250"/>
    <property type="project" value="BHF-UCL"/>
</dbReference>
<dbReference type="GO" id="GO:0030837">
    <property type="term" value="P:negative regulation of actin filament polymerization"/>
    <property type="evidence" value="ECO:0007669"/>
    <property type="project" value="Ensembl"/>
</dbReference>
<dbReference type="GO" id="GO:0038108">
    <property type="term" value="P:negative regulation of appetite by leptin-mediated signaling pathway"/>
    <property type="evidence" value="ECO:0000250"/>
    <property type="project" value="BHF-UCL"/>
</dbReference>
<dbReference type="GO" id="GO:0045776">
    <property type="term" value="P:negative regulation of blood pressure"/>
    <property type="evidence" value="ECO:0007669"/>
    <property type="project" value="Ensembl"/>
</dbReference>
<dbReference type="GO" id="GO:0010629">
    <property type="term" value="P:negative regulation of gene expression"/>
    <property type="evidence" value="ECO:0007669"/>
    <property type="project" value="Ensembl"/>
</dbReference>
<dbReference type="GO" id="GO:1905515">
    <property type="term" value="P:non-motile cilium assembly"/>
    <property type="evidence" value="ECO:0007669"/>
    <property type="project" value="Ensembl"/>
</dbReference>
<dbReference type="GO" id="GO:0045494">
    <property type="term" value="P:photoreceptor cell maintenance"/>
    <property type="evidence" value="ECO:0000250"/>
    <property type="project" value="BHF-UCL"/>
</dbReference>
<dbReference type="GO" id="GO:0051877">
    <property type="term" value="P:pigment granule aggregation in cell center"/>
    <property type="evidence" value="ECO:0000250"/>
    <property type="project" value="BHF-UCL"/>
</dbReference>
<dbReference type="GO" id="GO:0040018">
    <property type="term" value="P:positive regulation of multicellular organism growth"/>
    <property type="evidence" value="ECO:0007669"/>
    <property type="project" value="Ensembl"/>
</dbReference>
<dbReference type="GO" id="GO:0006457">
    <property type="term" value="P:protein folding"/>
    <property type="evidence" value="ECO:0000304"/>
    <property type="project" value="ProtInc"/>
</dbReference>
<dbReference type="GO" id="GO:0060296">
    <property type="term" value="P:regulation of cilium beat frequency involved in ciliary motility"/>
    <property type="evidence" value="ECO:0000250"/>
    <property type="project" value="BHF-UCL"/>
</dbReference>
<dbReference type="GO" id="GO:0051492">
    <property type="term" value="P:regulation of stress fiber assembly"/>
    <property type="evidence" value="ECO:0007669"/>
    <property type="project" value="Ensembl"/>
</dbReference>
<dbReference type="GO" id="GO:1902140">
    <property type="term" value="P:response to inositol"/>
    <property type="evidence" value="ECO:0007669"/>
    <property type="project" value="Ensembl"/>
</dbReference>
<dbReference type="GO" id="GO:0007608">
    <property type="term" value="P:sensory perception of smell"/>
    <property type="evidence" value="ECO:0000250"/>
    <property type="project" value="BHF-UCL"/>
</dbReference>
<dbReference type="GO" id="GO:0035176">
    <property type="term" value="P:social behavior"/>
    <property type="evidence" value="ECO:0000250"/>
    <property type="project" value="BHF-UCL"/>
</dbReference>
<dbReference type="GO" id="GO:0007286">
    <property type="term" value="P:spermatid development"/>
    <property type="evidence" value="ECO:0000250"/>
    <property type="project" value="BHF-UCL"/>
</dbReference>
<dbReference type="GO" id="GO:0021756">
    <property type="term" value="P:striatum development"/>
    <property type="evidence" value="ECO:0000250"/>
    <property type="project" value="BHF-UCL"/>
</dbReference>
<dbReference type="GO" id="GO:0042311">
    <property type="term" value="P:vasodilation"/>
    <property type="evidence" value="ECO:0007669"/>
    <property type="project" value="Ensembl"/>
</dbReference>
<dbReference type="GO" id="GO:0007601">
    <property type="term" value="P:visual perception"/>
    <property type="evidence" value="ECO:0007669"/>
    <property type="project" value="UniProtKB-KW"/>
</dbReference>
<dbReference type="FunFam" id="3.30.260.10:FF:000016">
    <property type="entry name" value="McKusick-Kaufman syndrome"/>
    <property type="match status" value="1"/>
</dbReference>
<dbReference type="FunFam" id="3.50.7.10:FF:000011">
    <property type="entry name" value="McKusick-Kaufman/Bardet-Biedl syndromes putative chaperonin"/>
    <property type="match status" value="1"/>
</dbReference>
<dbReference type="Gene3D" id="3.50.7.10">
    <property type="entry name" value="GroEL"/>
    <property type="match status" value="1"/>
</dbReference>
<dbReference type="Gene3D" id="1.10.560.10">
    <property type="entry name" value="GroEL-like equatorial domain"/>
    <property type="match status" value="1"/>
</dbReference>
<dbReference type="Gene3D" id="3.30.260.10">
    <property type="entry name" value="TCP-1-like chaperonin intermediate domain"/>
    <property type="match status" value="1"/>
</dbReference>
<dbReference type="InterPro" id="IPR002423">
    <property type="entry name" value="Cpn60/GroEL/TCP-1"/>
</dbReference>
<dbReference type="InterPro" id="IPR027409">
    <property type="entry name" value="GroEL-like_apical_dom_sf"/>
</dbReference>
<dbReference type="InterPro" id="IPR027413">
    <property type="entry name" value="GROEL-like_equatorial_sf"/>
</dbReference>
<dbReference type="InterPro" id="IPR028790">
    <property type="entry name" value="MKKS"/>
</dbReference>
<dbReference type="InterPro" id="IPR027410">
    <property type="entry name" value="TCP-1-like_intermed_sf"/>
</dbReference>
<dbReference type="PANTHER" id="PTHR46787:SF1">
    <property type="entry name" value="MOLECULAR CHAPERONE MKKS"/>
    <property type="match status" value="1"/>
</dbReference>
<dbReference type="PANTHER" id="PTHR46787">
    <property type="entry name" value="SYNDROMES PUTATIVE CHAPERONIN-RELATED"/>
    <property type="match status" value="1"/>
</dbReference>
<dbReference type="Pfam" id="PF00118">
    <property type="entry name" value="Cpn60_TCP1"/>
    <property type="match status" value="1"/>
</dbReference>
<dbReference type="SUPFAM" id="SSF52029">
    <property type="entry name" value="GroEL apical domain-like"/>
    <property type="match status" value="1"/>
</dbReference>
<dbReference type="SUPFAM" id="SSF48592">
    <property type="entry name" value="GroEL equatorial domain-like"/>
    <property type="match status" value="1"/>
</dbReference>
<comment type="function">
    <text evidence="17 22">Probable molecular chaperone that assists the folding of proteins upon ATP hydrolysis (PubMed:20080638). Plays a role in the assembly of BBSome, a complex involved in ciliogenesis regulating transports vesicles to the cilia (PubMed:20080638). May play a role in protein processing in limb, cardiac and reproductive system development. May play a role in cytokinesis (PubMed:28753627).</text>
</comment>
<comment type="subunit">
    <text evidence="15 16 17 21 22 24">Component of a complex composed at least of MKKS, BBS10, BBS12, TCP1, CCT2, CCT3, CCT4, CCT5 and CCT8 (PubMed:20080638). Interacts with STUB1 (PubMed:18094050). Interacts with BBS2 (via coiled coil domain) (PubMed:20080638). Interacts with CCDC28B (PubMed:16327777). Interacts with BBS12 (PubMed:26900326). Interacts with SMARCC1, a component of the SWI/SNF complexes; the interaction takes place predominantly in the cytoplasm and may modulate SMARCC1 location (PubMed:28753627). Interacts with DLEC1 (PubMed:33144677).</text>
</comment>
<comment type="interaction">
    <interactant intactId="EBI-721319">
        <id>Q9NPJ1</id>
    </interactant>
    <interactant intactId="EBI-6128352">
        <id>Q6ZW61</id>
        <label>BBS12</label>
    </interactant>
    <organismsDiffer>false</organismsDiffer>
    <experiments>15</experiments>
</comment>
<comment type="interaction">
    <interactant intactId="EBI-721319">
        <id>Q9NPJ1</id>
    </interactant>
    <interactant intactId="EBI-748297">
        <id>Q9BXC9</id>
        <label>BBS2</label>
    </interactant>
    <organismsDiffer>false</organismsDiffer>
    <experiments>3</experiments>
</comment>
<comment type="interaction">
    <interactant intactId="EBI-721319">
        <id>Q9NPJ1</id>
    </interactant>
    <interactant intactId="EBI-1181367">
        <id>Q01850</id>
        <label>CDR2</label>
    </interactant>
    <organismsDiffer>false</organismsDiffer>
    <experiments>3</experiments>
</comment>
<comment type="interaction">
    <interactant intactId="EBI-721319">
        <id>Q9NPJ1</id>
    </interactant>
    <interactant intactId="EBI-740037">
        <id>O96006</id>
        <label>ZBED1</label>
    </interactant>
    <organismsDiffer>false</organismsDiffer>
    <experiments>3</experiments>
</comment>
<comment type="subcellular location">
    <subcellularLocation>
        <location>Cytoplasm</location>
        <location>Cytoskeleton</location>
        <location>Microtubule organizing center</location>
        <location>Centrosome</location>
    </subcellularLocation>
    <subcellularLocation>
        <location evidence="22">Cytoplasm</location>
        <location evidence="22">Cytosol</location>
    </subcellularLocation>
    <subcellularLocation>
        <location evidence="22">Nucleus</location>
    </subcellularLocation>
    <text>The majority of the protein resides within the pericentriolar material (PCM), a proteinaceous tube surrounding centrioles. During interphase, the protein is confined to the lateral surfaces of the PCM but during mitosis it relocalizes throughout the PCM and is found at the intercellular bridge. The MKSS protein is highly mobile and rapidly shuttles between the cytosol and centrosome.</text>
</comment>
<comment type="tissue specificity">
    <text>Widely expressed in adult and fetal tissues.</text>
</comment>
<comment type="domain">
    <text>The substrate-binding apical domain region is sufficient for centrosomal association.</text>
</comment>
<comment type="disease" evidence="2 22">
    <disease id="DI-01953">
        <name>McKusick-Kaufman syndrome</name>
        <acronym>MKKS</acronym>
        <description>Autosomal recessive developmental disorder. It is characterized by hydrometrocolpos, postaxial polydactyly and congenital heart defects.</description>
        <dbReference type="MIM" id="236700"/>
    </disease>
    <text>The disease is caused by variants affecting the gene represented in this entry.</text>
</comment>
<comment type="disease" evidence="3 4 5 6 7 8 10 12 13 14 16 17 19 20 21 22 23">
    <disease id="DI-00164">
        <name>Bardet-Biedl syndrome 6</name>
        <acronym>BBS6</acronym>
        <description>A syndrome characterized by usually severe pigmentary retinopathy, early-onset obesity, polydactyly, hypogenitalism, renal malformation and intellectual disability. Secondary features include diabetes mellitus, hypertension and congenital heart disease. Bardet-Biedl syndrome inheritance is autosomal recessive, but three mutated alleles (two at one locus, and a third at a second locus) may be required for clinical manifestation of some forms of the disease.</description>
        <dbReference type="MIM" id="605231"/>
    </disease>
    <text>The disease is caused by variants affecting the gene represented in this entry.</text>
</comment>
<comment type="similarity">
    <text evidence="26">Belongs to the TCP-1 chaperonin family.</text>
</comment>
<accession>Q9NPJ1</accession>
<accession>A8K7B0</accession>
<accession>D3DW18</accession>
<organism>
    <name type="scientific">Homo sapiens</name>
    <name type="common">Human</name>
    <dbReference type="NCBI Taxonomy" id="9606"/>
    <lineage>
        <taxon>Eukaryota</taxon>
        <taxon>Metazoa</taxon>
        <taxon>Chordata</taxon>
        <taxon>Craniata</taxon>
        <taxon>Vertebrata</taxon>
        <taxon>Euteleostomi</taxon>
        <taxon>Mammalia</taxon>
        <taxon>Eutheria</taxon>
        <taxon>Euarchontoglires</taxon>
        <taxon>Primates</taxon>
        <taxon>Haplorrhini</taxon>
        <taxon>Catarrhini</taxon>
        <taxon>Hominidae</taxon>
        <taxon>Homo</taxon>
    </lineage>
</organism>
<name>MKKS_HUMAN</name>
<sequence length="570" mass="62342">MSRLEAKKPSLCKSEPLTTERVRTTLSVLKRIVTSCYGPSGRLKQLHNGFGGYVCTTSQSSALLSHLLVTHPILKILTASIQNHVSSFSDCGLFTAILCCNLIENVQRLGLTPTTVIRLNKHLLSLCISYLKSETCGCRIPVDFSSTQILLCLVRSILTSKPACMLTRKETEHVSALILRAFLLTIPENAEGHIILGKSLIVPLKGQRVIDSTVLPGILIEMSEVQLMRLLPIKKSTALKVALFCTTLSGDTSDTGEGTVVVSYGVSLENAVLDQLLNLGRQLISDHVDLVLCQKVIHPSLKQFLNMHRIIAIDRIGVTLMEPLTKMTGTQPIGSLGSICPNSYGSVKDVCTAKFGSKHFFHLIPNEATICSLLLCNRNDTAWDELKLTCQTALHVLQLTLKEPWALLGGGCTETHLAAYIRHKTHNDPESILKDDECTQTELQLIAEAFCSALESVVGSLEHDGGEILTDMKYGHLWSVQADSPCVANWPDLLSQCGCGLYNSQEELNWSFLRSTRRPFVPQSCLPHEAVGSASNLTLDCLTAKLSGLQVAVETANLILDLSYVIEDKN</sequence>
<proteinExistence type="evidence at protein level"/>
<protein>
    <recommendedName>
        <fullName evidence="26">Molecular chaperone MKKS</fullName>
    </recommendedName>
    <alternativeName>
        <fullName>Bardet-Biedl syndrome 6 protein</fullName>
    </alternativeName>
    <alternativeName>
        <fullName>McKusick-Kaufman/Bardet-Biedl syndromes putative chaperonin</fullName>
    </alternativeName>
</protein>
<gene>
    <name evidence="27" type="primary">MKKS</name>
    <name evidence="25" type="synonym">BBS6</name>
</gene>
<feature type="chain" id="PRO_0000128415" description="Molecular chaperone MKKS">
    <location>
        <begin position="1"/>
        <end position="570"/>
    </location>
</feature>
<feature type="region of interest" description="Substrate-binding apical domain">
    <location>
        <begin position="198"/>
        <end position="370"/>
    </location>
</feature>
<feature type="binding site" evidence="1">
    <location>
        <begin position="192"/>
        <end position="199"/>
    </location>
    <ligand>
        <name>ATP</name>
        <dbReference type="ChEBI" id="CHEBI:30616"/>
    </ligand>
</feature>
<feature type="sequence variant" id="VAR_017035" description="In BBS6." evidence="5">
    <original>I</original>
    <variation>M</variation>
    <location>
        <position position="32"/>
    </location>
</feature>
<feature type="sequence variant" id="VAR_009864" description="In MKKS and BBS6; causes both increased MKKS protein degradation and reduced solubility relative to wild-type and Tyr-84 mutant; the mutant is immobilized at the centrosome even in the absence of proteasome inhibition; the mutant is also highly polyubiquitinated; no effect on import to the nucleus; dbSNP:rs74315396." evidence="2 4 6 16 17 22">
    <original>Y</original>
    <variation>C</variation>
    <location>
        <position position="37"/>
    </location>
</feature>
<feature type="sequence variant" id="VAR_080223" description="In BBS6." evidence="23">
    <location>
        <begin position="40"/>
        <end position="570"/>
    </location>
</feature>
<feature type="sequence variant" id="VAR_066262" description="In BBS6; dbSNP:rs766132697." evidence="19">
    <original>G</original>
    <variation>R</variation>
    <location>
        <position position="41"/>
    </location>
</feature>
<feature type="sequence variant" id="VAR_009865" description="In dbSNP:rs528833454." evidence="2">
    <original>G</original>
    <variation>V</variation>
    <location>
        <position position="49"/>
    </location>
</feature>
<feature type="sequence variant" id="VAR_009882" description="In BBS6; fails to associate with centrosome; dbSNP:rs28937875." evidence="3 13 17">
    <original>G</original>
    <variation>D</variation>
    <location>
        <position position="52"/>
    </location>
</feature>
<feature type="sequence variant" id="VAR_009883" description="In BBS6; found in a patient also carrying A-155 in TMEM237; causes both increased MKKS protein degradation and reduced solubility relative to wild-type and Y-84 mutant; greatly reduces the ability to interact with BBS12; dbSNP:rs74315399." evidence="4 5 16 17 20">
    <original>T</original>
    <variation>A</variation>
    <location>
        <position position="57"/>
    </location>
</feature>
<feature type="sequence variant" id="VAR_009866" description="In MKKS; associated with S-242; decreased interaction with BBS12; no effect on ciliogenesis; disrupts import to the nucleus; no effect on interaction with SMARCC1; may affect modulation of SMARCC1 subcellular location; dbSNP:rs281797258." evidence="2 17 22">
    <original>H</original>
    <variation>Y</variation>
    <location>
        <position position="84"/>
    </location>
</feature>
<feature type="sequence variant" id="VAR_066263" description="In BBS6; dbSNP:rs1297985227." evidence="19">
    <original>C</original>
    <variation>R</variation>
    <location>
        <position position="99"/>
    </location>
</feature>
<feature type="sequence variant" id="VAR_017040" description="In BBS6; increases MKKS protein degradation; localizes properly to the centrosome; dbSNP:rs138111422." evidence="7 13">
    <original>R</original>
    <variation>L</variation>
    <location>
        <position position="155"/>
    </location>
</feature>
<feature type="sequence variant" id="VAR_038898" description="In BBS6." evidence="10">
    <original>A</original>
    <variation>P</variation>
    <location>
        <position position="181"/>
    </location>
</feature>
<feature type="sequence variant" id="VAR_017036" description="In BBS6." evidence="5 8 17">
    <original>S</original>
    <variation>P</variation>
    <location>
        <position position="236"/>
    </location>
</feature>
<feature type="sequence variant" id="VAR_038899" description="In BBS6; dbSNP:rs760185677." evidence="14">
    <original>T</original>
    <variation>A</variation>
    <location>
        <position position="237"/>
    </location>
</feature>
<feature type="sequence variant" id="VAR_038900" description="In BBS6." evidence="12 14">
    <original>T</original>
    <variation>P</variation>
    <location>
        <position position="237"/>
    </location>
</feature>
<feature type="sequence variant" id="VAR_009867" description="In MKKS and BBS6; uncertain significance; associated in cis with Y-84 in MKKS; increases MKKS protein degradation; no effect on ciliogenesis; disrupts import to the nucleus; no effect on interaction with SMARCC1; may affect modulation of SMARCC1 subcellular location; dbSNP:rs74315394." evidence="2 5 6 7 11 16 18 22">
    <original>A</original>
    <variation>S</variation>
    <location>
        <position position="242"/>
    </location>
</feature>
<feature type="sequence variant" id="VAR_009884" description="In BBS6; moderately affects interaction with BBS2; greatly reduces the ability to interact with BBS12; dbSNP:rs74315398." evidence="4 17">
    <original>L</original>
    <variation>P</variation>
    <location>
        <position position="277"/>
    </location>
</feature>
<feature type="sequence variant" id="VAR_017037" description="In BBS6; fails to associate with centrosome." evidence="5 13">
    <original>D</original>
    <variation>A</variation>
    <location>
        <position position="286"/>
    </location>
</feature>
<feature type="sequence variant" id="VAR_066264" description="In BBS6; dbSNP:rs756083063." evidence="19">
    <original>P</original>
    <variation>L</variation>
    <location>
        <position position="299"/>
    </location>
</feature>
<feature type="sequence variant" id="VAR_038901" description="Has a modifier effect on BBS; causes a mislocalization of the protein; fails to associate with centrosome; dbSNP:rs137853156." evidence="8 9 13">
    <original>T</original>
    <variation>P</variation>
    <location>
        <position position="325"/>
    </location>
</feature>
<feature type="sequence variant" id="VAR_017041" description="In dbSNP:rs137853909." evidence="7 12 14">
    <original>I</original>
    <variation>V</variation>
    <location>
        <position position="339"/>
    </location>
</feature>
<feature type="sequence variant" id="VAR_017042" description="In BBS6; increases MKKS protein degradation; fails to associate with centrosome; the mutant is highly polyubiquitinated and rapidly degraded by the ubiquitin-proteasome protein degradation pathway; dbSNP:rs779116830." evidence="7 13 16">
    <original>G</original>
    <variation>E</variation>
    <location>
        <position position="345"/>
    </location>
</feature>
<feature type="sequence variant" id="VAR_077208" description="In BBS6; atypical mild phenotype consisting of retinitis pigmentosa and polydactyly without other signs of Bardet-Biedl syndrome; results in decreased interaction with BBS12; dbSNP:rs912923677." evidence="21">
    <original>H</original>
    <variation>R</variation>
    <location>
        <position position="395"/>
    </location>
</feature>
<feature type="sequence variant" id="VAR_038902" description="In BBS6." evidence="12">
    <original>S</original>
    <variation>P</variation>
    <location>
        <position position="460"/>
    </location>
</feature>
<feature type="sequence variant" id="VAR_066265" description="In a patient with Bardet-Biedl syndrome compound heterozygote for mutations in BBS12; uncertain significance; dbSNP:rs61734546." evidence="19">
    <original>A</original>
    <variation>T</variation>
    <location>
        <position position="488"/>
    </location>
</feature>
<feature type="sequence variant" id="VAR_038903" description="In BBS6; uncertain significance; dbSNP:rs142327258." evidence="10">
    <original>D</original>
    <variation>N</variation>
    <location>
        <position position="492"/>
    </location>
</feature>
<feature type="sequence variant" id="VAR_013161" description="In BBS6; causes both increased MKKS protein degradation and reduced solubility relative to wild-type and Tyr-84 mutant; localizes properly to the centrosome; dbSNP:rs281797259 and dbSNP:rs137853155." evidence="5 6 13 16">
    <original>C</original>
    <variation>S</variation>
    <location>
        <position position="499"/>
    </location>
</feature>
<feature type="sequence variant" id="VAR_017038" description="In BBS6." evidence="5">
    <original>S</original>
    <variation>A</variation>
    <location>
        <position position="511"/>
    </location>
</feature>
<feature type="sequence variant" id="VAR_009868" description="In dbSNP:rs1547." evidence="2 11 12 14">
    <original>R</original>
    <variation>C</variation>
    <location>
        <position position="517"/>
    </location>
</feature>
<feature type="sequence variant" id="VAR_017039" description="In BBS6; dbSNP:rs149051148." evidence="5">
    <original>R</original>
    <variation>H</variation>
    <location>
        <position position="518"/>
    </location>
</feature>
<feature type="sequence variant" id="VAR_009869" description="In dbSNP:rs1545." evidence="11 12 14">
    <original>G</original>
    <variation>V</variation>
    <location>
        <position position="532"/>
    </location>
</feature>
<feature type="mutagenesis site" description="No effect on import to the nucleus." evidence="22">
    <original>L</original>
    <variation>P</variation>
    <location>
        <position position="454"/>
    </location>
</feature>
<keyword id="KW-0067">ATP-binding</keyword>
<keyword id="KW-0083">Bardet-Biedl syndrome</keyword>
<keyword id="KW-0143">Chaperone</keyword>
<keyword id="KW-1186">Ciliopathy</keyword>
<keyword id="KW-0963">Cytoplasm</keyword>
<keyword id="KW-0206">Cytoskeleton</keyword>
<keyword id="KW-0225">Disease variant</keyword>
<keyword id="KW-0991">Intellectual disability</keyword>
<keyword id="KW-0547">Nucleotide-binding</keyword>
<keyword id="KW-0539">Nucleus</keyword>
<keyword id="KW-0550">Obesity</keyword>
<keyword id="KW-1267">Proteomics identification</keyword>
<keyword id="KW-1185">Reference proteome</keyword>
<keyword id="KW-0716">Sensory transduction</keyword>
<keyword id="KW-0844">Vision</keyword>
<reference key="1">
    <citation type="journal article" date="2000" name="Nat. Genet.">
        <title>Mutation of a gene encoding a putative chaperonin causes McKusick-Kaufman syndrome.</title>
        <authorList>
            <person name="Stone D.L."/>
            <person name="Slavotinek A.M."/>
            <person name="Bouffard G.G."/>
            <person name="Banerjee-Basu S."/>
            <person name="Baxevanis A.D."/>
            <person name="Barr M."/>
            <person name="Biesecker L.G."/>
        </authorList>
    </citation>
    <scope>NUCLEOTIDE SEQUENCE [MRNA]</scope>
    <scope>VARIANTS MKKS CYS-37; TYR-84 AND SER-242</scope>
    <scope>VARIANTS VAL-49 AND CYS-517</scope>
</reference>
<reference key="2">
    <citation type="journal article" date="2004" name="Nat. Genet.">
        <title>Complete sequencing and characterization of 21,243 full-length human cDNAs.</title>
        <authorList>
            <person name="Ota T."/>
            <person name="Suzuki Y."/>
            <person name="Nishikawa T."/>
            <person name="Otsuki T."/>
            <person name="Sugiyama T."/>
            <person name="Irie R."/>
            <person name="Wakamatsu A."/>
            <person name="Hayashi K."/>
            <person name="Sato H."/>
            <person name="Nagai K."/>
            <person name="Kimura K."/>
            <person name="Makita H."/>
            <person name="Sekine M."/>
            <person name="Obayashi M."/>
            <person name="Nishi T."/>
            <person name="Shibahara T."/>
            <person name="Tanaka T."/>
            <person name="Ishii S."/>
            <person name="Yamamoto J."/>
            <person name="Saito K."/>
            <person name="Kawai Y."/>
            <person name="Isono Y."/>
            <person name="Nakamura Y."/>
            <person name="Nagahari K."/>
            <person name="Murakami K."/>
            <person name="Yasuda T."/>
            <person name="Iwayanagi T."/>
            <person name="Wagatsuma M."/>
            <person name="Shiratori A."/>
            <person name="Sudo H."/>
            <person name="Hosoiri T."/>
            <person name="Kaku Y."/>
            <person name="Kodaira H."/>
            <person name="Kondo H."/>
            <person name="Sugawara M."/>
            <person name="Takahashi M."/>
            <person name="Kanda K."/>
            <person name="Yokoi T."/>
            <person name="Furuya T."/>
            <person name="Kikkawa E."/>
            <person name="Omura Y."/>
            <person name="Abe K."/>
            <person name="Kamihara K."/>
            <person name="Katsuta N."/>
            <person name="Sato K."/>
            <person name="Tanikawa M."/>
            <person name="Yamazaki M."/>
            <person name="Ninomiya K."/>
            <person name="Ishibashi T."/>
            <person name="Yamashita H."/>
            <person name="Murakawa K."/>
            <person name="Fujimori K."/>
            <person name="Tanai H."/>
            <person name="Kimata M."/>
            <person name="Watanabe M."/>
            <person name="Hiraoka S."/>
            <person name="Chiba Y."/>
            <person name="Ishida S."/>
            <person name="Ono Y."/>
            <person name="Takiguchi S."/>
            <person name="Watanabe S."/>
            <person name="Yosida M."/>
            <person name="Hotuta T."/>
            <person name="Kusano J."/>
            <person name="Kanehori K."/>
            <person name="Takahashi-Fujii A."/>
            <person name="Hara H."/>
            <person name="Tanase T.-O."/>
            <person name="Nomura Y."/>
            <person name="Togiya S."/>
            <person name="Komai F."/>
            <person name="Hara R."/>
            <person name="Takeuchi K."/>
            <person name="Arita M."/>
            <person name="Imose N."/>
            <person name="Musashino K."/>
            <person name="Yuuki H."/>
            <person name="Oshima A."/>
            <person name="Sasaki N."/>
            <person name="Aotsuka S."/>
            <person name="Yoshikawa Y."/>
            <person name="Matsunawa H."/>
            <person name="Ichihara T."/>
            <person name="Shiohata N."/>
            <person name="Sano S."/>
            <person name="Moriya S."/>
            <person name="Momiyama H."/>
            <person name="Satoh N."/>
            <person name="Takami S."/>
            <person name="Terashima Y."/>
            <person name="Suzuki O."/>
            <person name="Nakagawa S."/>
            <person name="Senoh A."/>
            <person name="Mizoguchi H."/>
            <person name="Goto Y."/>
            <person name="Shimizu F."/>
            <person name="Wakebe H."/>
            <person name="Hishigaki H."/>
            <person name="Watanabe T."/>
            <person name="Sugiyama A."/>
            <person name="Takemoto M."/>
            <person name="Kawakami B."/>
            <person name="Yamazaki M."/>
            <person name="Watanabe K."/>
            <person name="Kumagai A."/>
            <person name="Itakura S."/>
            <person name="Fukuzumi Y."/>
            <person name="Fujimori Y."/>
            <person name="Komiyama M."/>
            <person name="Tashiro H."/>
            <person name="Tanigami A."/>
            <person name="Fujiwara T."/>
            <person name="Ono T."/>
            <person name="Yamada K."/>
            <person name="Fujii Y."/>
            <person name="Ozaki K."/>
            <person name="Hirao M."/>
            <person name="Ohmori Y."/>
            <person name="Kawabata A."/>
            <person name="Hikiji T."/>
            <person name="Kobatake N."/>
            <person name="Inagaki H."/>
            <person name="Ikema Y."/>
            <person name="Okamoto S."/>
            <person name="Okitani R."/>
            <person name="Kawakami T."/>
            <person name="Noguchi S."/>
            <person name="Itoh T."/>
            <person name="Shigeta K."/>
            <person name="Senba T."/>
            <person name="Matsumura K."/>
            <person name="Nakajima Y."/>
            <person name="Mizuno T."/>
            <person name="Morinaga M."/>
            <person name="Sasaki M."/>
            <person name="Togashi T."/>
            <person name="Oyama M."/>
            <person name="Hata H."/>
            <person name="Watanabe M."/>
            <person name="Komatsu T."/>
            <person name="Mizushima-Sugano J."/>
            <person name="Satoh T."/>
            <person name="Shirai Y."/>
            <person name="Takahashi Y."/>
            <person name="Nakagawa K."/>
            <person name="Okumura K."/>
            <person name="Nagase T."/>
            <person name="Nomura N."/>
            <person name="Kikuchi H."/>
            <person name="Masuho Y."/>
            <person name="Yamashita R."/>
            <person name="Nakai K."/>
            <person name="Yada T."/>
            <person name="Nakamura Y."/>
            <person name="Ohara O."/>
            <person name="Isogai T."/>
            <person name="Sugano S."/>
        </authorList>
    </citation>
    <scope>NUCLEOTIDE SEQUENCE [LARGE SCALE MRNA]</scope>
</reference>
<reference key="3">
    <citation type="journal article" date="2007" name="BMC Genomics">
        <title>The full-ORF clone resource of the German cDNA consortium.</title>
        <authorList>
            <person name="Bechtel S."/>
            <person name="Rosenfelder H."/>
            <person name="Duda A."/>
            <person name="Schmidt C.P."/>
            <person name="Ernst U."/>
            <person name="Wellenreuther R."/>
            <person name="Mehrle A."/>
            <person name="Schuster C."/>
            <person name="Bahr A."/>
            <person name="Bloecker H."/>
            <person name="Heubner D."/>
            <person name="Hoerlein A."/>
            <person name="Michel G."/>
            <person name="Wedler H."/>
            <person name="Koehrer K."/>
            <person name="Ottenwaelder B."/>
            <person name="Poustka A."/>
            <person name="Wiemann S."/>
            <person name="Schupp I."/>
        </authorList>
    </citation>
    <scope>NUCLEOTIDE SEQUENCE [LARGE SCALE MRNA]</scope>
    <source>
        <tissue>Amygdala</tissue>
    </source>
</reference>
<reference key="4">
    <citation type="journal article" date="2001" name="Nature">
        <title>The DNA sequence and comparative analysis of human chromosome 20.</title>
        <authorList>
            <person name="Deloukas P."/>
            <person name="Matthews L.H."/>
            <person name="Ashurst J.L."/>
            <person name="Burton J."/>
            <person name="Gilbert J.G.R."/>
            <person name="Jones M."/>
            <person name="Stavrides G."/>
            <person name="Almeida J.P."/>
            <person name="Babbage A.K."/>
            <person name="Bagguley C.L."/>
            <person name="Bailey J."/>
            <person name="Barlow K.F."/>
            <person name="Bates K.N."/>
            <person name="Beard L.M."/>
            <person name="Beare D.M."/>
            <person name="Beasley O.P."/>
            <person name="Bird C.P."/>
            <person name="Blakey S.E."/>
            <person name="Bridgeman A.M."/>
            <person name="Brown A.J."/>
            <person name="Buck D."/>
            <person name="Burrill W.D."/>
            <person name="Butler A.P."/>
            <person name="Carder C."/>
            <person name="Carter N.P."/>
            <person name="Chapman J.C."/>
            <person name="Clamp M."/>
            <person name="Clark G."/>
            <person name="Clark L.N."/>
            <person name="Clark S.Y."/>
            <person name="Clee C.M."/>
            <person name="Clegg S."/>
            <person name="Cobley V.E."/>
            <person name="Collier R.E."/>
            <person name="Connor R.E."/>
            <person name="Corby N.R."/>
            <person name="Coulson A."/>
            <person name="Coville G.J."/>
            <person name="Deadman R."/>
            <person name="Dhami P.D."/>
            <person name="Dunn M."/>
            <person name="Ellington A.G."/>
            <person name="Frankland J.A."/>
            <person name="Fraser A."/>
            <person name="French L."/>
            <person name="Garner P."/>
            <person name="Grafham D.V."/>
            <person name="Griffiths C."/>
            <person name="Griffiths M.N.D."/>
            <person name="Gwilliam R."/>
            <person name="Hall R.E."/>
            <person name="Hammond S."/>
            <person name="Harley J.L."/>
            <person name="Heath P.D."/>
            <person name="Ho S."/>
            <person name="Holden J.L."/>
            <person name="Howden P.J."/>
            <person name="Huckle E."/>
            <person name="Hunt A.R."/>
            <person name="Hunt S.E."/>
            <person name="Jekosch K."/>
            <person name="Johnson C.M."/>
            <person name="Johnson D."/>
            <person name="Kay M.P."/>
            <person name="Kimberley A.M."/>
            <person name="King A."/>
            <person name="Knights A."/>
            <person name="Laird G.K."/>
            <person name="Lawlor S."/>
            <person name="Lehvaeslaiho M.H."/>
            <person name="Leversha M.A."/>
            <person name="Lloyd C."/>
            <person name="Lloyd D.M."/>
            <person name="Lovell J.D."/>
            <person name="Marsh V.L."/>
            <person name="Martin S.L."/>
            <person name="McConnachie L.J."/>
            <person name="McLay K."/>
            <person name="McMurray A.A."/>
            <person name="Milne S.A."/>
            <person name="Mistry D."/>
            <person name="Moore M.J.F."/>
            <person name="Mullikin J.C."/>
            <person name="Nickerson T."/>
            <person name="Oliver K."/>
            <person name="Parker A."/>
            <person name="Patel R."/>
            <person name="Pearce T.A.V."/>
            <person name="Peck A.I."/>
            <person name="Phillimore B.J.C.T."/>
            <person name="Prathalingam S.R."/>
            <person name="Plumb R.W."/>
            <person name="Ramsay H."/>
            <person name="Rice C.M."/>
            <person name="Ross M.T."/>
            <person name="Scott C.E."/>
            <person name="Sehra H.K."/>
            <person name="Shownkeen R."/>
            <person name="Sims S."/>
            <person name="Skuce C.D."/>
            <person name="Smith M.L."/>
            <person name="Soderlund C."/>
            <person name="Steward C.A."/>
            <person name="Sulston J.E."/>
            <person name="Swann R.M."/>
            <person name="Sycamore N."/>
            <person name="Taylor R."/>
            <person name="Tee L."/>
            <person name="Thomas D.W."/>
            <person name="Thorpe A."/>
            <person name="Tracey A."/>
            <person name="Tromans A.C."/>
            <person name="Vaudin M."/>
            <person name="Wall M."/>
            <person name="Wallis J.M."/>
            <person name="Whitehead S.L."/>
            <person name="Whittaker P."/>
            <person name="Willey D.L."/>
            <person name="Williams L."/>
            <person name="Williams S.A."/>
            <person name="Wilming L."/>
            <person name="Wray P.W."/>
            <person name="Hubbard T."/>
            <person name="Durbin R.M."/>
            <person name="Bentley D.R."/>
            <person name="Beck S."/>
            <person name="Rogers J."/>
        </authorList>
    </citation>
    <scope>NUCLEOTIDE SEQUENCE [LARGE SCALE GENOMIC DNA]</scope>
</reference>
<reference key="5">
    <citation type="submission" date="2005-09" db="EMBL/GenBank/DDBJ databases">
        <authorList>
            <person name="Mural R.J."/>
            <person name="Istrail S."/>
            <person name="Sutton G.G."/>
            <person name="Florea L."/>
            <person name="Halpern A.L."/>
            <person name="Mobarry C.M."/>
            <person name="Lippert R."/>
            <person name="Walenz B."/>
            <person name="Shatkay H."/>
            <person name="Dew I."/>
            <person name="Miller J.R."/>
            <person name="Flanigan M.J."/>
            <person name="Edwards N.J."/>
            <person name="Bolanos R."/>
            <person name="Fasulo D."/>
            <person name="Halldorsson B.V."/>
            <person name="Hannenhalli S."/>
            <person name="Turner R."/>
            <person name="Yooseph S."/>
            <person name="Lu F."/>
            <person name="Nusskern D.R."/>
            <person name="Shue B.C."/>
            <person name="Zheng X.H."/>
            <person name="Zhong F."/>
            <person name="Delcher A.L."/>
            <person name="Huson D.H."/>
            <person name="Kravitz S.A."/>
            <person name="Mouchard L."/>
            <person name="Reinert K."/>
            <person name="Remington K.A."/>
            <person name="Clark A.G."/>
            <person name="Waterman M.S."/>
            <person name="Eichler E.E."/>
            <person name="Adams M.D."/>
            <person name="Hunkapiller M.W."/>
            <person name="Myers E.W."/>
            <person name="Venter J.C."/>
        </authorList>
    </citation>
    <scope>NUCLEOTIDE SEQUENCE [LARGE SCALE GENOMIC DNA]</scope>
</reference>
<reference key="6">
    <citation type="journal article" date="2005" name="J. Cell Sci.">
        <title>MKKS/BBS6, a divergent chaperonin-like protein linked to the obesity disorder Bardet-Biedl syndrome, is a novel centrosomal component required for cytokinesis.</title>
        <authorList>
            <person name="Kim J.C."/>
            <person name="Ou Y.Y."/>
            <person name="Badano J.L."/>
            <person name="Esmail M.A."/>
            <person name="Leitch C.C."/>
            <person name="Fiedrich E."/>
            <person name="Beales P.L."/>
            <person name="Archibald J.M."/>
            <person name="Katsanis N."/>
            <person name="Rattner J.B."/>
            <person name="Leroux M.R."/>
        </authorList>
    </citation>
    <scope>SUBCELLULAR LOCATION</scope>
    <scope>CHARACTERIZATION OF VARIANTS BBS6 ASP-52; LEU-155; ALA-286; GLU-345 AND SER-499</scope>
    <scope>CHARACTERIZATION OF VARIANT PRO-325</scope>
</reference>
<reference key="7">
    <citation type="journal article" date="2006" name="Nature">
        <title>Dissection of epistasis in oligogenic Bardet-Biedl syndrome.</title>
        <authorList>
            <person name="Badano J.L."/>
            <person name="Leitch C.C."/>
            <person name="Ansley S.J."/>
            <person name="May-Simera H."/>
            <person name="Lawson S."/>
            <person name="Lewis R.A."/>
            <person name="Beales P.L."/>
            <person name="Dietz H.C."/>
            <person name="Fisher S."/>
            <person name="Katsanis N."/>
        </authorList>
    </citation>
    <scope>INTERACTION WITH CCDC28B</scope>
</reference>
<reference key="8">
    <citation type="journal article" date="2008" name="Mol. Biol. Cell">
        <title>MKKS is a centrosome-shuttling protein degraded by disease-causing mutations via CHIP-mediated ubiquitination.</title>
        <authorList>
            <person name="Hirayama S."/>
            <person name="Yamazaki Y."/>
            <person name="Kitamura A."/>
            <person name="Oda Y."/>
            <person name="Morito D."/>
            <person name="Okawa K."/>
            <person name="Kimura H."/>
            <person name="Cyr D.M."/>
            <person name="Kubota H."/>
            <person name="Nagata K."/>
        </authorList>
    </citation>
    <scope>SUBCELLULAR LOCATION</scope>
    <scope>INTERACTION WITH STUB1</scope>
    <scope>CHARACTERIZATION OF VARIANTS BBS6 CYS-37; ALA-57; SER-242; GLU-345 AND SER-499</scope>
</reference>
<reference key="9">
    <citation type="journal article" date="2010" name="Proc. Natl. Acad. Sci. U.S.A.">
        <title>BBS6, BBS10, and BBS12 form a complex with CCT/TRiC family chaperonins and mediate BBSome assembly.</title>
        <authorList>
            <person name="Seo S."/>
            <person name="Baye L.M."/>
            <person name="Schulz N.P."/>
            <person name="Beck J.S."/>
            <person name="Zhang Q."/>
            <person name="Slusarski D.C."/>
            <person name="Sheffield V.C."/>
        </authorList>
    </citation>
    <scope>FUNCTION</scope>
    <scope>IDENTIFICATION IN A MULTIPROTEIN COMPLEX</scope>
    <scope>INTERACTION WITH BBS2</scope>
    <scope>CHARACTERIZATION OF VARIANTS BBS6 CYS-37; ASP-52; ALA-57; TYR-84; PRO-236 AND PRO-277</scope>
</reference>
<reference key="10">
    <citation type="journal article" date="2016" name="Mol. Vis.">
        <title>A novel H395R mutation in MKKS/BBS6 causes retinitis pigmentosa and polydactyly without other findings of Bardet-Biedl or McKusick-Kaufman syndrome.</title>
        <authorList>
            <person name="Hulleman J.D."/>
            <person name="Nguyen A."/>
            <person name="Ramprasad V.L."/>
            <person name="Murugan S."/>
            <person name="Gupta R."/>
            <person name="Mahindrakar A."/>
            <person name="Angara R."/>
            <person name="Sankurathri C."/>
            <person name="Mootha V.V."/>
        </authorList>
    </citation>
    <scope>INTERACTION WITH BBS12</scope>
    <scope>VARIANT BBS6 ARG-395</scope>
    <scope>CHARACTERIZATION OF VARIANT BBS6 ARG-395</scope>
</reference>
<reference key="11">
    <citation type="journal article" date="2020" name="Sci. Rep.">
        <title>Dlec1 is required for spermatogenesis and male fertility in mice.</title>
        <authorList>
            <person name="Okitsu Y."/>
            <person name="Nagano M."/>
            <person name="Yamagata T."/>
            <person name="Ito C."/>
            <person name="Toshimori K."/>
            <person name="Dohra H."/>
            <person name="Fujii W."/>
            <person name="Yogo K."/>
        </authorList>
    </citation>
    <scope>INTERACTION WITH DLEC1</scope>
</reference>
<reference key="12">
    <citation type="journal article" date="2000" name="Nat. Genet.">
        <title>Mutations in MKKS cause Bardet-Biedl syndrome.</title>
        <authorList>
            <person name="Slavotinek A.M."/>
            <person name="Stone E.M."/>
            <person name="Mykytyn K."/>
            <person name="Heckenlively J.R."/>
            <person name="Green J.S."/>
            <person name="Heon E."/>
            <person name="Musarella M.A."/>
            <person name="Parfrey P.S."/>
            <person name="Sheffield V.C."/>
            <person name="Biesecker L.G."/>
        </authorList>
    </citation>
    <scope>VARIANT BBS6 ASP-52</scope>
</reference>
<reference key="13">
    <citation type="journal article" date="2000" name="Nat. Genet.">
        <title>Mutations in MKKS cause obesity, retinal dystrophy and renal malformations associated with Bardet-Biedl syndrome.</title>
        <authorList>
            <person name="Katsanis N."/>
            <person name="Beales P.L."/>
            <person name="Woods M.O."/>
            <person name="Lewis R.A."/>
            <person name="Green J.S."/>
            <person name="Parfrey P.S."/>
            <person name="Ansley S.J."/>
            <person name="Davidson W.S."/>
            <person name="Lupski J.R."/>
        </authorList>
    </citation>
    <scope>VARIANTS BBS6 CYS-37; ALA-57 AND PRO-277</scope>
    <source>
        <tissue>Peripheral blood lymphocyte</tissue>
    </source>
</reference>
<reference key="14">
    <citation type="journal article" date="2001" name="Am. J. Hum. Genet.">
        <title>Genetic and mutational analyses of a large multiethnic Bardet-Biedl cohort reveal a minor involvement of BBS6 and delineate the critical intervals of other loci.</title>
        <authorList>
            <person name="Beales P.L."/>
            <person name="Katsanis N."/>
            <person name="Lewis R.A."/>
            <person name="Ansley S.J."/>
            <person name="Elcioglu N."/>
            <person name="Raza J."/>
            <person name="Woods M.O."/>
            <person name="Green J.S."/>
            <person name="Parfrey P.S."/>
            <person name="Davidson W.S."/>
            <person name="Lupski J.R."/>
        </authorList>
    </citation>
    <scope>VARIANTS BBS6 MET-32; ALA-57; PRO-236; ALA-286; SER-499; ALA-511 AND HIS-518</scope>
    <scope>VARIANT SER-242</scope>
</reference>
<reference key="15">
    <citation type="journal article" date="2001" name="Science">
        <title>Triallelic inheritance in Bardet-Biedl syndrome, a Mendelian recessive disorder.</title>
        <authorList>
            <person name="Katsanis N."/>
            <person name="Ansley S.J."/>
            <person name="Badano J.L."/>
            <person name="Eichers E.R."/>
            <person name="Lewis R.A."/>
            <person name="Hoskins B.E."/>
            <person name="Scambler P.J."/>
            <person name="Davidson W.S."/>
            <person name="Beales P.L."/>
            <person name="Lupski J.R."/>
        </authorList>
    </citation>
    <scope>VARIANTS BBS6 CYS-37; SER-242 AND SER-499</scope>
</reference>
<reference key="16">
    <citation type="journal article" date="2002" name="Hum. Genet.">
        <title>Mutation analysis of the MKKS gene in McKusick-Kaufman syndrome and selected Bardet-Biedl syndrome patients.</title>
        <authorList>
            <person name="Slavotinek A.M."/>
            <person name="Searby C."/>
            <person name="Al-Gazali L."/>
            <person name="Hennekam R.C.M."/>
            <person name="Schrander-Stumpel C."/>
            <person name="Orcana-Losa M."/>
            <person name="Pardo-Reoyo S."/>
            <person name="Cantani A."/>
            <person name="Kumar D."/>
            <person name="Capellini Q."/>
            <person name="Neri G."/>
            <person name="Zackai E."/>
            <person name="Biesecker L.G."/>
        </authorList>
    </citation>
    <scope>VARIANTS BBS6 LEU-155; SER-242 AND GLU-345</scope>
    <scope>VARIANT VAL-339</scope>
</reference>
<reference key="17">
    <citation type="journal article" date="2003" name="Am. J. Hum. Genet.">
        <title>Genetic interaction of BBS1 mutations with alleles at other BBS loci can result in non-Mendelian Bardet-Biedl syndrome.</title>
        <authorList>
            <person name="Beales P.L."/>
            <person name="Badano J.L."/>
            <person name="Ross A.J."/>
            <person name="Ansley S.J."/>
            <person name="Hoskins B.E."/>
            <person name="Kirsten B."/>
            <person name="Mein C.A."/>
            <person name="Froguel P."/>
            <person name="Scambler P.J."/>
            <person name="Lewis R.A."/>
            <person name="Lupski J.R."/>
            <person name="Katsanis N."/>
        </authorList>
    </citation>
    <scope>VARIANT BBS6 PRO-236</scope>
    <scope>VARIANT PRO-325</scope>
</reference>
<reference key="18">
    <citation type="journal article" date="2003" name="Hum. Mol. Genet.">
        <title>Heterozygous mutations in BBS1, BBS2 and BBS6 have a potential epistatic effect on Bardet-Biedl patients with two mutations at a second BBS locus.</title>
        <authorList>
            <person name="Badano J.L."/>
            <person name="Kim J.C."/>
            <person name="Hoskins B.E."/>
            <person name="Lewis R.A."/>
            <person name="Ansley S.J."/>
            <person name="Cutler D.J."/>
            <person name="Castellan C."/>
            <person name="Beales P.L."/>
            <person name="Leroux M.R."/>
            <person name="Katsanis N."/>
        </authorList>
    </citation>
    <scope>VARIANT PRO-325</scope>
    <scope>CHARACTERIZATION OF VARIANT PRO-325</scope>
</reference>
<reference key="19">
    <citation type="journal article" date="2003" name="J. Med. Genet.">
        <title>Further support for digenic inheritance in Bardet-Biedl syndrome.</title>
        <authorList>
            <person name="Fauser S."/>
            <person name="Munz M."/>
            <person name="Besch D."/>
        </authorList>
    </citation>
    <scope>VARIANTS BBS6 PRO-181 AND ASN-492</scope>
</reference>
<reference key="20">
    <citation type="journal article" date="2005" name="Am. J. Hum. Genet.">
        <title>Antenatal presentation of Bardet-Biedl syndrome may mimic Meckel syndrome.</title>
        <authorList>
            <person name="Karmous-Benailly H."/>
            <person name="Martinovic J."/>
            <person name="Gubler M.-C."/>
            <person name="Sirot Y."/>
            <person name="Clech L."/>
            <person name="Ozilou C."/>
            <person name="Auge J."/>
            <person name="Brahimi N."/>
            <person name="Etchevers H."/>
            <person name="Detrait E."/>
            <person name="Esculpavit C."/>
            <person name="Audollent S."/>
            <person name="Goudefroye G."/>
            <person name="Gonzales M."/>
            <person name="Tantau J."/>
            <person name="Loget P."/>
            <person name="Joubert M."/>
            <person name="Gaillard D."/>
            <person name="Jeanne-Pasquier C."/>
            <person name="Delezoide A.-L."/>
            <person name="Peter M.-O."/>
            <person name="Plessis G."/>
            <person name="Simon-Bouy B."/>
            <person name="Dollfus H."/>
            <person name="Le Merrer M."/>
            <person name="Munnich A."/>
            <person name="Encha-Razavi F."/>
            <person name="Vekemans M."/>
            <person name="Attie-Bitach T."/>
        </authorList>
    </citation>
    <scope>VARIANTS BBS6 PRO-237 AND PRO-460</scope>
    <scope>VARIANTS VAL-339; CYS-517 AND VAL-532</scope>
</reference>
<reference key="21">
    <citation type="journal article" date="2005" name="Eur. J. Hum. Genet.">
        <title>Testing for triallelism: analysis of six BBS genes in a Bardet-Biedl syndrome family cohort.</title>
        <authorList>
            <person name="Hichri H."/>
            <person name="Stoetzel C."/>
            <person name="Laurier V."/>
            <person name="Caron S."/>
            <person name="Sigaudy S."/>
            <person name="Sarda P."/>
            <person name="Hamel C."/>
            <person name="Martin-Coignard D."/>
            <person name="Gilles M."/>
            <person name="Leheup B."/>
            <person name="Holder M."/>
            <person name="Kaplan J."/>
            <person name="Bitoun P."/>
            <person name="Lacombe D."/>
            <person name="Verloes A."/>
            <person name="Bonneau D."/>
            <person name="Perrin-Schmitt F."/>
            <person name="Brandt C."/>
            <person name="Besancon A.-F."/>
            <person name="Mandel J.-L."/>
            <person name="Cossee M."/>
            <person name="Dollfus H."/>
        </authorList>
    </citation>
    <scope>VARIANTS BBS6 ALA-237 AND PRO-237</scope>
    <scope>VARIANTS VAL-339; CYS-517 AND VAL-532</scope>
</reference>
<reference key="22">
    <citation type="journal article" date="2005" name="J. Clin. Endocrinol. Metab.">
        <title>Variation of the McKusick-Kaufman gene and studies of relationships with common forms of obesity.</title>
        <authorList>
            <person name="Andersen K.L."/>
            <person name="Echwald S.M."/>
            <person name="Larsen L.H."/>
            <person name="Hamid Y.H."/>
            <person name="Glumer C."/>
            <person name="Jorgensen T."/>
            <person name="Borch-Johnsen K."/>
            <person name="Andersen T."/>
            <person name="Sorensen T.I."/>
            <person name="Hansen T."/>
            <person name="Pedersen O."/>
        </authorList>
    </citation>
    <scope>VARIANTS SER-242; CYS-517 AND VAL-532</scope>
</reference>
<reference key="23">
    <citation type="journal article" date="2010" name="Hum. Mutat.">
        <title>Bardet-Biedl syndrome in Denmark -- report of 13 novel sequence variations in six genes.</title>
        <authorList>
            <person name="Hjortshoj T.D."/>
            <person name="Gronskov K."/>
            <person name="Philp A.R."/>
            <person name="Nishimura D.Y."/>
            <person name="Riise R."/>
            <person name="Sheffield V.C."/>
            <person name="Rosenberg T."/>
            <person name="Brondum-Nielsen K."/>
        </authorList>
    </citation>
    <scope>VARIANT SER-242</scope>
    <scope>DISCUSSION OF THE PATHOLOGICAL ROLE OF VARIANT SER-242</scope>
</reference>
<reference key="24">
    <citation type="journal article" date="2011" name="Hum. Mutat.">
        <title>BBS genotype-phenotype assessment of a multiethnic patient cohort calls for a revision of the disease definition.</title>
        <authorList>
            <person name="Deveault C."/>
            <person name="Billingsley G."/>
            <person name="Duncan J.L."/>
            <person name="Bin J."/>
            <person name="Theal R."/>
            <person name="Vincent A."/>
            <person name="Fieggen K.J."/>
            <person name="Gerth C."/>
            <person name="Noordeh N."/>
            <person name="Traboulsi E.I."/>
            <person name="Fishman G.A."/>
            <person name="Chitayat D."/>
            <person name="Knueppel T."/>
            <person name="Millan J.M."/>
            <person name="Munier F.L."/>
            <person name="Kennedy D."/>
            <person name="Jacobson S.G."/>
            <person name="Innes A.M."/>
            <person name="Mitchell G.A."/>
            <person name="Boycott K."/>
            <person name="Heon E."/>
        </authorList>
    </citation>
    <scope>VARIANTS BBS6 ARG-41; ARG-99 AND LEU-299</scope>
    <scope>VARIANT THR-488</scope>
</reference>
<reference key="25">
    <citation type="journal article" date="2011" name="Am. J. Hum. Genet.">
        <title>TMEM237 is mutated in individuals with a Joubert syndrome related disorder and expands the role of the TMEM family at the ciliary transition zone.</title>
        <authorList>
            <person name="Huang L."/>
            <person name="Szymanska K."/>
            <person name="Jensen V.L."/>
            <person name="Janecke A.R."/>
            <person name="Innes A.M."/>
            <person name="Davis E.E."/>
            <person name="Frosk P."/>
            <person name="Li C."/>
            <person name="Willer J.R."/>
            <person name="Chodirker B.N."/>
            <person name="Greenberg C.R."/>
            <person name="McLeod D.R."/>
            <person name="Bernier F.P."/>
            <person name="Chudley A.E."/>
            <person name="Muller T."/>
            <person name="Shboul M."/>
            <person name="Logan C.V."/>
            <person name="Loucks C.M."/>
            <person name="Beaulieu C.L."/>
            <person name="Bowie R.V."/>
            <person name="Bell S.M."/>
            <person name="Adkins J."/>
            <person name="Zuniga F.I."/>
            <person name="Ross K.D."/>
            <person name="Wang J."/>
            <person name="Ban M.R."/>
            <person name="Becker C."/>
            <person name="Nurnberg P."/>
            <person name="Douglas S."/>
            <person name="Craft C.M."/>
            <person name="Akimenko M.A."/>
            <person name="Hegele R.A."/>
            <person name="Ober C."/>
            <person name="Utermann G."/>
            <person name="Bolz H.J."/>
            <person name="Bulman D.E."/>
            <person name="Katsanis N."/>
            <person name="Blacque O.E."/>
            <person name="Doherty D."/>
            <person name="Parboosingh J.S."/>
            <person name="Leroux M.R."/>
            <person name="Johnson C.A."/>
            <person name="Boycott K.M."/>
        </authorList>
    </citation>
    <scope>VARIANT BBS6 ALA-57</scope>
</reference>
<reference key="26">
    <citation type="journal article" date="2017" name="Mol. Vis.">
        <title>Sequence variants in four genes underlying Bardet-Biedl syndrome in consanguineous families.</title>
        <authorList>
            <person name="Ullah A."/>
            <person name="Umair M."/>
            <person name="Yousaf M."/>
            <person name="Khan S.A."/>
            <person name="Nazim-Ud-Din M."/>
            <person name="Shah K."/>
            <person name="Ahmad F."/>
            <person name="Azeem Z."/>
            <person name="Ali G."/>
            <person name="Alhaddad B."/>
            <person name="Rafique A."/>
            <person name="Jan A."/>
            <person name="Haack T.B."/>
            <person name="Strom T.M."/>
            <person name="Meitinger T."/>
            <person name="Ghous T."/>
            <person name="Ahmad W."/>
        </authorList>
    </citation>
    <scope>VARIANT BBS6 40-SER--ASN-570 DEL</scope>
</reference>
<reference key="27">
    <citation type="journal article" date="2017" name="PLoS Genet.">
        <title>Nuclear/cytoplasmic transport defects in BBS6 underlie congenital heart disease through perturbation of a chromatin remodeling protein.</title>
        <authorList>
            <person name="Scott C.A."/>
            <person name="Marsden A.N."/>
            <person name="Rebagliati M.R."/>
            <person name="Zhang Q."/>
            <person name="Chamling X."/>
            <person name="Searby C.C."/>
            <person name="Baye L.M."/>
            <person name="Sheffield V.C."/>
            <person name="Slusarski D.C."/>
        </authorList>
    </citation>
    <scope>CHARACTERIZATION OF VARIANTS MKKS CYS-37; TYR-84 AND SER-242</scope>
    <scope>SUBCELLULAR LOCATION</scope>
    <scope>FUNCTION</scope>
    <scope>MUTAGENESIS OF LEU-454</scope>
    <scope>CHARACTERIZATION OF VARIANT BBS6 CYS-37</scope>
    <scope>INTERACTION WITH SMARCC1</scope>
</reference>
<evidence type="ECO:0000255" key="1"/>
<evidence type="ECO:0000269" key="2">
    <source>
    </source>
</evidence>
<evidence type="ECO:0000269" key="3">
    <source>
    </source>
</evidence>
<evidence type="ECO:0000269" key="4">
    <source>
    </source>
</evidence>
<evidence type="ECO:0000269" key="5">
    <source>
    </source>
</evidence>
<evidence type="ECO:0000269" key="6">
    <source>
    </source>
</evidence>
<evidence type="ECO:0000269" key="7">
    <source>
    </source>
</evidence>
<evidence type="ECO:0000269" key="8">
    <source>
    </source>
</evidence>
<evidence type="ECO:0000269" key="9">
    <source>
    </source>
</evidence>
<evidence type="ECO:0000269" key="10">
    <source>
    </source>
</evidence>
<evidence type="ECO:0000269" key="11">
    <source>
    </source>
</evidence>
<evidence type="ECO:0000269" key="12">
    <source>
    </source>
</evidence>
<evidence type="ECO:0000269" key="13">
    <source>
    </source>
</evidence>
<evidence type="ECO:0000269" key="14">
    <source>
    </source>
</evidence>
<evidence type="ECO:0000269" key="15">
    <source>
    </source>
</evidence>
<evidence type="ECO:0000269" key="16">
    <source>
    </source>
</evidence>
<evidence type="ECO:0000269" key="17">
    <source>
    </source>
</evidence>
<evidence type="ECO:0000269" key="18">
    <source>
    </source>
</evidence>
<evidence type="ECO:0000269" key="19">
    <source>
    </source>
</evidence>
<evidence type="ECO:0000269" key="20">
    <source>
    </source>
</evidence>
<evidence type="ECO:0000269" key="21">
    <source>
    </source>
</evidence>
<evidence type="ECO:0000269" key="22">
    <source>
    </source>
</evidence>
<evidence type="ECO:0000269" key="23">
    <source>
    </source>
</evidence>
<evidence type="ECO:0000269" key="24">
    <source>
    </source>
</evidence>
<evidence type="ECO:0000303" key="25">
    <source>
    </source>
</evidence>
<evidence type="ECO:0000305" key="26"/>
<evidence type="ECO:0000312" key="27">
    <source>
        <dbReference type="HGNC" id="HGNC:7108"/>
    </source>
</evidence>